<proteinExistence type="evidence at transcript level"/>
<protein>
    <recommendedName>
        <fullName>Zinc finger protein Aiolos</fullName>
    </recommendedName>
    <alternativeName>
        <fullName>Ikaros family zinc finger protein 3</fullName>
    </alternativeName>
</protein>
<comment type="function">
    <text evidence="2">Transcription factor that plays an important role in the regulation of lymphocyte differentiation. Plays an essential role in regulation of B-cell differentiation, proliferation and maturation to an effector state. Involved in regulating BCL2 expression and controlling apoptosis in T-cells in an IL2-dependent manner (By similarity).</text>
</comment>
<comment type="subunit">
    <text evidence="2">Homodimer. Heterodimer with other IKAROS family members. Interacts with IKZF4 and IKZF5. Interacts with IKZF1. Interacts with HRAS. Interacts with FOXP3; this interaction may be required for silencing target genes and regulating the suppressive activity of FOXP3-positive regulatory T-cells (Treg). Interacts with BCL21L; this interaction blocks the anti-apoptotic role of BCL21L. Associates with histone deacetylase complexes containing HDAC1, MTA2 and SIN3A (By similarity).</text>
</comment>
<comment type="subcellular location">
    <subcellularLocation>
        <location evidence="2">Nucleus</location>
    </subcellularLocation>
    <subcellularLocation>
        <location evidence="2">Cytoplasm</location>
    </subcellularLocation>
</comment>
<comment type="domain">
    <text evidence="2">C2H2-type 5 and C2H2-type 6 mediate homodimerization and heterodimerization.</text>
</comment>
<comment type="similarity">
    <text evidence="5">Belongs to the Ikaros C2H2-type zinc-finger protein family.</text>
</comment>
<evidence type="ECO:0000250" key="1">
    <source>
        <dbReference type="UniProtKB" id="O08900"/>
    </source>
</evidence>
<evidence type="ECO:0000250" key="2">
    <source>
        <dbReference type="UniProtKB" id="Q9UKT9"/>
    </source>
</evidence>
<evidence type="ECO:0000255" key="3">
    <source>
        <dbReference type="PROSITE-ProRule" id="PRU00042"/>
    </source>
</evidence>
<evidence type="ECO:0000256" key="4">
    <source>
        <dbReference type="SAM" id="MobiDB-lite"/>
    </source>
</evidence>
<evidence type="ECO:0000305" key="5"/>
<organism>
    <name type="scientific">Bos taurus</name>
    <name type="common">Bovine</name>
    <dbReference type="NCBI Taxonomy" id="9913"/>
    <lineage>
        <taxon>Eukaryota</taxon>
        <taxon>Metazoa</taxon>
        <taxon>Chordata</taxon>
        <taxon>Craniata</taxon>
        <taxon>Vertebrata</taxon>
        <taxon>Euteleostomi</taxon>
        <taxon>Mammalia</taxon>
        <taxon>Eutheria</taxon>
        <taxon>Laurasiatheria</taxon>
        <taxon>Artiodactyla</taxon>
        <taxon>Ruminantia</taxon>
        <taxon>Pecora</taxon>
        <taxon>Bovidae</taxon>
        <taxon>Bovinae</taxon>
        <taxon>Bos</taxon>
    </lineage>
</organism>
<gene>
    <name type="primary">IKZF3</name>
    <name type="synonym">ZNFN1A3</name>
</gene>
<name>IKZF3_BOVIN</name>
<sequence length="509" mass="58154">MEDIKPNVELKSTQEQSVPTEGSELLNDYDLTKAHETENVDGTEGPANEDEDIGDDSMKVKDEYSERDENVLKPEPMGNAEEPEIPYSYSREYNEYENIKLERHVVSYDSSRPTSGKMNCDVCGLSCISFNVLMVHKRSHTGERPFQCNQCGASFTQKGNLLRHIKLHTGEKPFKCHLCNYACQRRDALTGHLRTHSVEKPYKCEFCGRSYKQRSSLEEHKERCRTFLQSTDLGETASVEARHIKAEMGSERALVLDRLASNVAKRKSSMPQKFIGEKRHCFDVSYNPSYMYEKESEMIQTRMMDQAINNAISYLGAEALRPLVQTPPAPTSEMVPVISSMYPIALTRAEMPNGAPQELEKKNIHLPEKSLPSERGLSPTNSGHDSTDTDSNHEERQNHIYQQNPMVPPRARNGMPLLKEGPRSYDLLKPPPICPRDSIKVINKEGEVTDVYRCDHCRVLFLDYVMFTIHMGCHGFRDPFECNMCGYRSHDRYEFSSHIARGEHRAMLK</sequence>
<reference key="1">
    <citation type="submission" date="2007-02" db="EMBL/GenBank/DDBJ databases">
        <authorList>
            <consortium name="NIH - Mammalian Gene Collection (MGC) project"/>
        </authorList>
    </citation>
    <scope>NUCLEOTIDE SEQUENCE [LARGE SCALE MRNA]</scope>
    <source>
        <strain>Hereford</strain>
        <tissue>Thymus</tissue>
    </source>
</reference>
<accession>A2VDW9</accession>
<keyword id="KW-0075">B-cell activation</keyword>
<keyword id="KW-0963">Cytoplasm</keyword>
<keyword id="KW-0238">DNA-binding</keyword>
<keyword id="KW-1017">Isopeptide bond</keyword>
<keyword id="KW-0479">Metal-binding</keyword>
<keyword id="KW-0539">Nucleus</keyword>
<keyword id="KW-0597">Phosphoprotein</keyword>
<keyword id="KW-1185">Reference proteome</keyword>
<keyword id="KW-0677">Repeat</keyword>
<keyword id="KW-0804">Transcription</keyword>
<keyword id="KW-0805">Transcription regulation</keyword>
<keyword id="KW-0832">Ubl conjugation</keyword>
<keyword id="KW-0862">Zinc</keyword>
<keyword id="KW-0863">Zinc-finger</keyword>
<dbReference type="EMBL" id="BC133439">
    <property type="protein sequence ID" value="AAI33440.1"/>
    <property type="molecule type" value="mRNA"/>
</dbReference>
<dbReference type="RefSeq" id="NP_001075082.1">
    <property type="nucleotide sequence ID" value="NM_001081613.2"/>
</dbReference>
<dbReference type="SMR" id="A2VDW9"/>
<dbReference type="FunCoup" id="A2VDW9">
    <property type="interactions" value="467"/>
</dbReference>
<dbReference type="STRING" id="9913.ENSBTAP00000014617"/>
<dbReference type="PaxDb" id="9913-ENSBTAP00000014617"/>
<dbReference type="Ensembl" id="ENSBTAT00000014617.6">
    <property type="protein sequence ID" value="ENSBTAP00000014617.6"/>
    <property type="gene ID" value="ENSBTAG00000011003.7"/>
</dbReference>
<dbReference type="GeneID" id="540676"/>
<dbReference type="KEGG" id="bta:540676"/>
<dbReference type="CTD" id="22806"/>
<dbReference type="VEuPathDB" id="HostDB:ENSBTAG00000011003"/>
<dbReference type="VGNC" id="VGNC:30104">
    <property type="gene designation" value="IKZF3"/>
</dbReference>
<dbReference type="eggNOG" id="KOG1721">
    <property type="taxonomic scope" value="Eukaryota"/>
</dbReference>
<dbReference type="GeneTree" id="ENSGT00940000160462"/>
<dbReference type="InParanoid" id="A2VDW9"/>
<dbReference type="OMA" id="MMQGRMM"/>
<dbReference type="OrthoDB" id="6417347at2759"/>
<dbReference type="Proteomes" id="UP000009136">
    <property type="component" value="Chromosome 19"/>
</dbReference>
<dbReference type="Bgee" id="ENSBTAG00000011003">
    <property type="expression patterns" value="Expressed in thymus and 68 other cell types or tissues"/>
</dbReference>
<dbReference type="GO" id="GO:0005737">
    <property type="term" value="C:cytoplasm"/>
    <property type="evidence" value="ECO:0007669"/>
    <property type="project" value="UniProtKB-SubCell"/>
</dbReference>
<dbReference type="GO" id="GO:0005634">
    <property type="term" value="C:nucleus"/>
    <property type="evidence" value="ECO:0000250"/>
    <property type="project" value="UniProtKB"/>
</dbReference>
<dbReference type="GO" id="GO:0001228">
    <property type="term" value="F:DNA-binding transcription activator activity, RNA polymerase II-specific"/>
    <property type="evidence" value="ECO:0000250"/>
    <property type="project" value="UniProtKB"/>
</dbReference>
<dbReference type="GO" id="GO:0003700">
    <property type="term" value="F:DNA-binding transcription factor activity"/>
    <property type="evidence" value="ECO:0000318"/>
    <property type="project" value="GO_Central"/>
</dbReference>
<dbReference type="GO" id="GO:0046982">
    <property type="term" value="F:protein heterodimerization activity"/>
    <property type="evidence" value="ECO:0000250"/>
    <property type="project" value="UniProtKB"/>
</dbReference>
<dbReference type="GO" id="GO:0042803">
    <property type="term" value="F:protein homodimerization activity"/>
    <property type="evidence" value="ECO:0000250"/>
    <property type="project" value="UniProtKB"/>
</dbReference>
<dbReference type="GO" id="GO:0000978">
    <property type="term" value="F:RNA polymerase II cis-regulatory region sequence-specific DNA binding"/>
    <property type="evidence" value="ECO:0000318"/>
    <property type="project" value="GO_Central"/>
</dbReference>
<dbReference type="GO" id="GO:0043565">
    <property type="term" value="F:sequence-specific DNA binding"/>
    <property type="evidence" value="ECO:0000250"/>
    <property type="project" value="UniProtKB"/>
</dbReference>
<dbReference type="GO" id="GO:0008270">
    <property type="term" value="F:zinc ion binding"/>
    <property type="evidence" value="ECO:0007669"/>
    <property type="project" value="UniProtKB-KW"/>
</dbReference>
<dbReference type="GO" id="GO:0030183">
    <property type="term" value="P:B cell differentiation"/>
    <property type="evidence" value="ECO:0000250"/>
    <property type="project" value="UniProtKB"/>
</dbReference>
<dbReference type="GO" id="GO:0042981">
    <property type="term" value="P:regulation of apoptotic process"/>
    <property type="evidence" value="ECO:0000250"/>
    <property type="project" value="UniProtKB"/>
</dbReference>
<dbReference type="GO" id="GO:0045577">
    <property type="term" value="P:regulation of B cell differentiation"/>
    <property type="evidence" value="ECO:0000250"/>
    <property type="project" value="UniProtKB"/>
</dbReference>
<dbReference type="GO" id="GO:0030888">
    <property type="term" value="P:regulation of B cell proliferation"/>
    <property type="evidence" value="ECO:0000250"/>
    <property type="project" value="UniProtKB"/>
</dbReference>
<dbReference type="GO" id="GO:0045619">
    <property type="term" value="P:regulation of lymphocyte differentiation"/>
    <property type="evidence" value="ECO:0000250"/>
    <property type="project" value="UniProtKB"/>
</dbReference>
<dbReference type="GO" id="GO:0006357">
    <property type="term" value="P:regulation of transcription by RNA polymerase II"/>
    <property type="evidence" value="ECO:0000318"/>
    <property type="project" value="GO_Central"/>
</dbReference>
<dbReference type="GO" id="GO:0030217">
    <property type="term" value="P:T cell differentiation"/>
    <property type="evidence" value="ECO:0000250"/>
    <property type="project" value="UniProtKB"/>
</dbReference>
<dbReference type="FunFam" id="3.30.160.60:FF:000073">
    <property type="entry name" value="IKAROS family zinc finger 1"/>
    <property type="match status" value="1"/>
</dbReference>
<dbReference type="FunFam" id="3.30.160.60:FF:000265">
    <property type="entry name" value="IKAROS family zinc finger 1"/>
    <property type="match status" value="1"/>
</dbReference>
<dbReference type="FunFam" id="3.30.160.60:FF:002057">
    <property type="entry name" value="IKAROS family zinc finger 3"/>
    <property type="match status" value="1"/>
</dbReference>
<dbReference type="FunFam" id="3.30.160.60:FF:002372">
    <property type="entry name" value="IKAROS family zinc finger 3"/>
    <property type="match status" value="1"/>
</dbReference>
<dbReference type="FunFam" id="3.30.160.60:FF:000080">
    <property type="entry name" value="IKAROS family zinc finger 4"/>
    <property type="match status" value="1"/>
</dbReference>
<dbReference type="Gene3D" id="3.30.160.60">
    <property type="entry name" value="Classic Zinc Finger"/>
    <property type="match status" value="5"/>
</dbReference>
<dbReference type="InterPro" id="IPR050589">
    <property type="entry name" value="Ikaros_C2H2-ZF"/>
</dbReference>
<dbReference type="InterPro" id="IPR036236">
    <property type="entry name" value="Znf_C2H2_sf"/>
</dbReference>
<dbReference type="InterPro" id="IPR013087">
    <property type="entry name" value="Znf_C2H2_type"/>
</dbReference>
<dbReference type="PANTHER" id="PTHR24404">
    <property type="entry name" value="ZINC FINGER PROTEIN"/>
    <property type="match status" value="1"/>
</dbReference>
<dbReference type="PANTHER" id="PTHR24404:SF23">
    <property type="entry name" value="ZINC FINGER PROTEIN AIOLOS"/>
    <property type="match status" value="1"/>
</dbReference>
<dbReference type="Pfam" id="PF00096">
    <property type="entry name" value="zf-C2H2"/>
    <property type="match status" value="2"/>
</dbReference>
<dbReference type="SMART" id="SM00355">
    <property type="entry name" value="ZnF_C2H2"/>
    <property type="match status" value="6"/>
</dbReference>
<dbReference type="SUPFAM" id="SSF57667">
    <property type="entry name" value="beta-beta-alpha zinc fingers"/>
    <property type="match status" value="3"/>
</dbReference>
<dbReference type="PROSITE" id="PS00028">
    <property type="entry name" value="ZINC_FINGER_C2H2_1"/>
    <property type="match status" value="4"/>
</dbReference>
<dbReference type="PROSITE" id="PS50157">
    <property type="entry name" value="ZINC_FINGER_C2H2_2"/>
    <property type="match status" value="4"/>
</dbReference>
<feature type="chain" id="PRO_0000297485" description="Zinc finger protein Aiolos">
    <location>
        <begin position="1"/>
        <end position="509"/>
    </location>
</feature>
<feature type="zinc finger region" description="C2H2-type 1" evidence="3">
    <location>
        <begin position="118"/>
        <end position="140"/>
    </location>
</feature>
<feature type="zinc finger region" description="C2H2-type 2" evidence="3">
    <location>
        <begin position="146"/>
        <end position="168"/>
    </location>
</feature>
<feature type="zinc finger region" description="C2H2-type 3" evidence="3">
    <location>
        <begin position="174"/>
        <end position="196"/>
    </location>
</feature>
<feature type="zinc finger region" description="C2H2-type 4; atypical" evidence="3">
    <location>
        <begin position="202"/>
        <end position="224"/>
    </location>
</feature>
<feature type="zinc finger region" description="C2H2-type 5" evidence="3">
    <location>
        <begin position="452"/>
        <end position="474"/>
    </location>
</feature>
<feature type="zinc finger region" description="C2H2-type 6; atypical" evidence="3">
    <location>
        <begin position="480"/>
        <end position="504"/>
    </location>
</feature>
<feature type="region of interest" description="Disordered" evidence="4">
    <location>
        <begin position="1"/>
        <end position="85"/>
    </location>
</feature>
<feature type="region of interest" description="Disordered" evidence="4">
    <location>
        <begin position="365"/>
        <end position="421"/>
    </location>
</feature>
<feature type="region of interest" description="Mediates homodimerization and heterodimerization" evidence="2">
    <location>
        <begin position="452"/>
        <end position="504"/>
    </location>
</feature>
<feature type="compositionally biased region" description="Polar residues" evidence="4">
    <location>
        <begin position="10"/>
        <end position="20"/>
    </location>
</feature>
<feature type="compositionally biased region" description="Basic and acidic residues" evidence="4">
    <location>
        <begin position="56"/>
        <end position="72"/>
    </location>
</feature>
<feature type="compositionally biased region" description="Basic and acidic residues" evidence="4">
    <location>
        <begin position="385"/>
        <end position="398"/>
    </location>
</feature>
<feature type="modified residue" description="Phosphothreonine" evidence="1">
    <location>
        <position position="20"/>
    </location>
</feature>
<feature type="modified residue" description="Phosphothreonine" evidence="2">
    <location>
        <position position="326"/>
    </location>
</feature>
<feature type="modified residue" description="Phosphoserine" evidence="1">
    <location>
        <position position="378"/>
    </location>
</feature>
<feature type="cross-link" description="Glycyl lysine isopeptide (Lys-Gly) (interchain with G-Cter in SUMO2)" evidence="2">
    <location>
        <position position="61"/>
    </location>
</feature>
<feature type="cross-link" description="Glycyl lysine isopeptide (Lys-Gly) (interchain with G-Cter in SUMO2)" evidence="2">
    <location>
        <position position="73"/>
    </location>
</feature>
<feature type="cross-link" description="Glycyl lysine isopeptide (Lys-Gly) (interchain with G-Cter in SUMO2)" evidence="2">
    <location>
        <position position="100"/>
    </location>
</feature>
<feature type="cross-link" description="Glycyl lysine isopeptide (Lys-Gly) (interchain with G-Cter in SUMO2)" evidence="2">
    <location>
        <position position="245"/>
    </location>
</feature>